<reference key="1">
    <citation type="journal article" date="2004" name="Science">
        <title>The Ashbya gossypii genome as a tool for mapping the ancient Saccharomyces cerevisiae genome.</title>
        <authorList>
            <person name="Dietrich F.S."/>
            <person name="Voegeli S."/>
            <person name="Brachat S."/>
            <person name="Lerch A."/>
            <person name="Gates K."/>
            <person name="Steiner S."/>
            <person name="Mohr C."/>
            <person name="Poehlmann R."/>
            <person name="Luedi P."/>
            <person name="Choi S."/>
            <person name="Wing R.A."/>
            <person name="Flavier A."/>
            <person name="Gaffney T.D."/>
            <person name="Philippsen P."/>
        </authorList>
    </citation>
    <scope>NUCLEOTIDE SEQUENCE [LARGE SCALE GENOMIC DNA]</scope>
    <source>
        <strain>ATCC 10895 / CBS 109.51 / FGSC 9923 / NRRL Y-1056</strain>
    </source>
</reference>
<reference key="2">
    <citation type="journal article" date="2013" name="G3 (Bethesda)">
        <title>Genomes of Ashbya fungi isolated from insects reveal four mating-type loci, numerous translocations, lack of transposons, and distinct gene duplications.</title>
        <authorList>
            <person name="Dietrich F.S."/>
            <person name="Voegeli S."/>
            <person name="Kuo S."/>
            <person name="Philippsen P."/>
        </authorList>
    </citation>
    <scope>GENOME REANNOTATION</scope>
    <scope>SEQUENCE REVISION TO C-TERMINUS</scope>
    <source>
        <strain>ATCC 10895 / CBS 109.51 / FGSC 9923 / NRRL Y-1056</strain>
    </source>
</reference>
<accession>Q754R5</accession>
<gene>
    <name type="primary">DOA4</name>
    <name type="synonym">UBP4</name>
    <name type="ordered locus">AFR007W</name>
</gene>
<feature type="chain" id="PRO_0000376818" description="Ubiquitin carboxyl-terminal hydrolase 4">
    <location>
        <begin position="1"/>
        <end position="852"/>
    </location>
</feature>
<feature type="domain" description="Rhodanese" evidence="2">
    <location>
        <begin position="172"/>
        <end position="296"/>
    </location>
</feature>
<feature type="domain" description="USP">
    <location>
        <begin position="488"/>
        <end position="849"/>
    </location>
</feature>
<feature type="region of interest" description="Disordered" evidence="5">
    <location>
        <begin position="369"/>
        <end position="393"/>
    </location>
</feature>
<feature type="active site" description="Nucleophile" evidence="3 4">
    <location>
        <position position="497"/>
    </location>
</feature>
<feature type="active site" description="Proton acceptor" evidence="3 4">
    <location>
        <position position="806"/>
    </location>
</feature>
<comment type="function">
    <text evidence="1">Ubiquitin thioesterase that acts at the late endosome/prevacuolar compartment to recover ubiquitin from ubiquitinated membrane proteins en route to the vacuole. Also removes ubiquitin from soluble proteins targeted to proteasomes. Is essential to maintain a normal level of free ubiquitin. Required for promoting coordination of DNA replication and avoids DNA overreplication (By similarity).</text>
</comment>
<comment type="catalytic activity">
    <reaction>
        <text>Thiol-dependent hydrolysis of ester, thioester, amide, peptide and isopeptide bonds formed by the C-terminal Gly of ubiquitin (a 76-residue protein attached to proteins as an intracellular targeting signal).</text>
        <dbReference type="EC" id="3.4.19.12"/>
    </reaction>
</comment>
<comment type="activity regulation">
    <text evidence="1">RFU1 is an inhibitor of deubiquitination activity.</text>
</comment>
<comment type="subcellular location">
    <subcellularLocation>
        <location evidence="1">Cytoplasm</location>
    </subcellularLocation>
    <subcellularLocation>
        <location evidence="1">Late endosome membrane</location>
        <topology evidence="1">Peripheral membrane protein</topology>
    </subcellularLocation>
</comment>
<comment type="similarity">
    <text evidence="6">Belongs to the peptidase C19 family.</text>
</comment>
<protein>
    <recommendedName>
        <fullName>Ubiquitin carboxyl-terminal hydrolase 4</fullName>
        <ecNumber>3.4.19.12</ecNumber>
    </recommendedName>
    <alternativeName>
        <fullName>Deubiquitinating enzyme 4</fullName>
    </alternativeName>
    <alternativeName>
        <fullName>Ubiquitin thioesterase 4</fullName>
    </alternativeName>
    <alternativeName>
        <fullName>Ubiquitin-specific-processing protease 4</fullName>
    </alternativeName>
</protein>
<organism>
    <name type="scientific">Eremothecium gossypii (strain ATCC 10895 / CBS 109.51 / FGSC 9923 / NRRL Y-1056)</name>
    <name type="common">Yeast</name>
    <name type="synonym">Ashbya gossypii</name>
    <dbReference type="NCBI Taxonomy" id="284811"/>
    <lineage>
        <taxon>Eukaryota</taxon>
        <taxon>Fungi</taxon>
        <taxon>Dikarya</taxon>
        <taxon>Ascomycota</taxon>
        <taxon>Saccharomycotina</taxon>
        <taxon>Saccharomycetes</taxon>
        <taxon>Saccharomycetales</taxon>
        <taxon>Saccharomycetaceae</taxon>
        <taxon>Eremothecium</taxon>
    </lineage>
</organism>
<dbReference type="EC" id="3.4.19.12"/>
<dbReference type="EMBL" id="AE016819">
    <property type="protein sequence ID" value="AAS53378.2"/>
    <property type="molecule type" value="Genomic_DNA"/>
</dbReference>
<dbReference type="RefSeq" id="NP_985554.2">
    <property type="nucleotide sequence ID" value="NM_210908.2"/>
</dbReference>
<dbReference type="SMR" id="Q754R5"/>
<dbReference type="FunCoup" id="Q754R5">
    <property type="interactions" value="157"/>
</dbReference>
<dbReference type="STRING" id="284811.Q754R5"/>
<dbReference type="MEROPS" id="C19.005"/>
<dbReference type="EnsemblFungi" id="AAS53378">
    <property type="protein sequence ID" value="AAS53378"/>
    <property type="gene ID" value="AGOS_AFR007W"/>
</dbReference>
<dbReference type="GeneID" id="4621793"/>
<dbReference type="KEGG" id="ago:AGOS_AFR007W"/>
<dbReference type="eggNOG" id="KOG1868">
    <property type="taxonomic scope" value="Eukaryota"/>
</dbReference>
<dbReference type="HOGENOM" id="CLU_005922_1_0_1"/>
<dbReference type="InParanoid" id="Q754R5"/>
<dbReference type="OMA" id="SIEWERY"/>
<dbReference type="OrthoDB" id="292964at2759"/>
<dbReference type="Proteomes" id="UP000000591">
    <property type="component" value="Chromosome VI"/>
</dbReference>
<dbReference type="GO" id="GO:0005935">
    <property type="term" value="C:cellular bud neck"/>
    <property type="evidence" value="ECO:0007669"/>
    <property type="project" value="EnsemblFungi"/>
</dbReference>
<dbReference type="GO" id="GO:0000131">
    <property type="term" value="C:incipient cellular bud site"/>
    <property type="evidence" value="ECO:0007669"/>
    <property type="project" value="EnsemblFungi"/>
</dbReference>
<dbReference type="GO" id="GO:0031902">
    <property type="term" value="C:late endosome membrane"/>
    <property type="evidence" value="ECO:0007669"/>
    <property type="project" value="UniProtKB-SubCell"/>
</dbReference>
<dbReference type="GO" id="GO:0004843">
    <property type="term" value="F:cysteine-type deubiquitinase activity"/>
    <property type="evidence" value="ECO:0007669"/>
    <property type="project" value="UniProtKB-EC"/>
</dbReference>
<dbReference type="GO" id="GO:0016579">
    <property type="term" value="P:protein deubiquitination"/>
    <property type="evidence" value="ECO:0007669"/>
    <property type="project" value="InterPro"/>
</dbReference>
<dbReference type="GO" id="GO:0006508">
    <property type="term" value="P:proteolysis"/>
    <property type="evidence" value="ECO:0007669"/>
    <property type="project" value="UniProtKB-KW"/>
</dbReference>
<dbReference type="CDD" id="cd02674">
    <property type="entry name" value="Peptidase_C19R"/>
    <property type="match status" value="1"/>
</dbReference>
<dbReference type="FunFam" id="3.90.70.10:FF:000115">
    <property type="entry name" value="DOA4p Ubiquitin hydrolase"/>
    <property type="match status" value="1"/>
</dbReference>
<dbReference type="Gene3D" id="3.90.70.10">
    <property type="entry name" value="Cysteine proteinases"/>
    <property type="match status" value="1"/>
</dbReference>
<dbReference type="Gene3D" id="3.40.250.10">
    <property type="entry name" value="Rhodanese-like domain"/>
    <property type="match status" value="1"/>
</dbReference>
<dbReference type="InterPro" id="IPR038765">
    <property type="entry name" value="Papain-like_cys_pep_sf"/>
</dbReference>
<dbReference type="InterPro" id="IPR001394">
    <property type="entry name" value="Peptidase_C19_UCH"/>
</dbReference>
<dbReference type="InterPro" id="IPR001763">
    <property type="entry name" value="Rhodanese-like_dom"/>
</dbReference>
<dbReference type="InterPro" id="IPR036873">
    <property type="entry name" value="Rhodanese-like_dom_sf"/>
</dbReference>
<dbReference type="InterPro" id="IPR050185">
    <property type="entry name" value="Ub_carboxyl-term_hydrolase"/>
</dbReference>
<dbReference type="InterPro" id="IPR018200">
    <property type="entry name" value="USP_CS"/>
</dbReference>
<dbReference type="InterPro" id="IPR028889">
    <property type="entry name" value="USP_dom"/>
</dbReference>
<dbReference type="PANTHER" id="PTHR21646">
    <property type="entry name" value="UBIQUITIN CARBOXYL-TERMINAL HYDROLASE"/>
    <property type="match status" value="1"/>
</dbReference>
<dbReference type="PANTHER" id="PTHR21646:SF95">
    <property type="entry name" value="UBIQUITIN CARBOXYL-TERMINAL HYDROLASE 4-RELATED"/>
    <property type="match status" value="1"/>
</dbReference>
<dbReference type="Pfam" id="PF00581">
    <property type="entry name" value="Rhodanese"/>
    <property type="match status" value="1"/>
</dbReference>
<dbReference type="Pfam" id="PF00443">
    <property type="entry name" value="UCH"/>
    <property type="match status" value="1"/>
</dbReference>
<dbReference type="SMART" id="SM00450">
    <property type="entry name" value="RHOD"/>
    <property type="match status" value="1"/>
</dbReference>
<dbReference type="SUPFAM" id="SSF54001">
    <property type="entry name" value="Cysteine proteinases"/>
    <property type="match status" value="1"/>
</dbReference>
<dbReference type="SUPFAM" id="SSF52821">
    <property type="entry name" value="Rhodanese/Cell cycle control phosphatase"/>
    <property type="match status" value="1"/>
</dbReference>
<dbReference type="PROSITE" id="PS50206">
    <property type="entry name" value="RHODANESE_3"/>
    <property type="match status" value="1"/>
</dbReference>
<dbReference type="PROSITE" id="PS00972">
    <property type="entry name" value="USP_1"/>
    <property type="match status" value="1"/>
</dbReference>
<dbReference type="PROSITE" id="PS00973">
    <property type="entry name" value="USP_2"/>
    <property type="match status" value="1"/>
</dbReference>
<dbReference type="PROSITE" id="PS50235">
    <property type="entry name" value="USP_3"/>
    <property type="match status" value="1"/>
</dbReference>
<sequence length="852" mass="96523">MPHIQESRVWCRSISQLSHLAEQFVTENGTESTDMKLLLQQCVDTLSNYQDECKKIKSVSKPVPSKELYDLYETAYVYFKIVSLIVLNKIPKLEEYARAKSDAVDRTGKQLLEIYNMLVNRLVKDDRIAEIKRFVKENSRRDPEAKNEQIGVESGKSIPATLLRNLLMGPSASGTVLLVDVRPRLDFMRCHIKSSSIICIEPVSFKESYTDIDLGKKSMITSPDAEIALFQDRDKFDYIVVYTQDSEKNKHNVQQQQLLVDLLINRSFEKALDRTKVFILAGGFSEWSNAHPDFCVSSQGDSVYLNGDTSGLSLQLMPQTTPQKQYNNMFQTMLSGPTDVHGIIRNPHNFPTQQKSKLKRVPSFRDYFRSSSSSSNINERPGSVPPQLSNGSTIYPETPKLMTNDEYMKSLPQLSPITARAITSPSRALSAVGVSKSSASNSISSLLANSGSASPMKPPDTPLPFTDSIKTLGQQNLTVAVSNLNFSVGLVNCGNSCYMSCIIQCLLGTQELCTMFLNNSYQNHINLNSRLGSKGLLARYFSQLIHQMYQYGKDIRKKMGNEKTAVIPTQFKIACGSINSSFKDNTQQDCQEFCQFLLDGLHEDLNQCGNNPPLKELSEEAEKMREMMPMRLASAIEWERYLTTDFSVIVDLFQGQYASQLQCKVCQRTSTTYQPFSVLSVPVPSTRTCTLTDCFTEFTKIETLEQEEQWSCPSCKKRQPSTKKITITRLPRNLIIHLKRFDNMLNKNNVFVSYPSVLDLTAFWANDYDKKVTNNNVELPSRGQVPPFNYQLYGIACHDGTLRAGHYTAYVNKGAVLGWCYYDDTNWRQIRSAREYITQNAYVLFYHRIHST</sequence>
<keyword id="KW-0963">Cytoplasm</keyword>
<keyword id="KW-0967">Endosome</keyword>
<keyword id="KW-0378">Hydrolase</keyword>
<keyword id="KW-0472">Membrane</keyword>
<keyword id="KW-0645">Protease</keyword>
<keyword id="KW-1185">Reference proteome</keyword>
<keyword id="KW-0788">Thiol protease</keyword>
<keyword id="KW-0833">Ubl conjugation pathway</keyword>
<evidence type="ECO:0000250" key="1"/>
<evidence type="ECO:0000255" key="2">
    <source>
        <dbReference type="PROSITE-ProRule" id="PRU00173"/>
    </source>
</evidence>
<evidence type="ECO:0000255" key="3">
    <source>
        <dbReference type="PROSITE-ProRule" id="PRU10092"/>
    </source>
</evidence>
<evidence type="ECO:0000255" key="4">
    <source>
        <dbReference type="PROSITE-ProRule" id="PRU10093"/>
    </source>
</evidence>
<evidence type="ECO:0000256" key="5">
    <source>
        <dbReference type="SAM" id="MobiDB-lite"/>
    </source>
</evidence>
<evidence type="ECO:0000305" key="6"/>
<proteinExistence type="inferred from homology"/>
<name>UBP4_EREGS</name>